<reference key="1">
    <citation type="journal article" date="2000" name="Nature">
        <title>Sequence and analysis of chromosome 1 of the plant Arabidopsis thaliana.</title>
        <authorList>
            <person name="Theologis A."/>
            <person name="Ecker J.R."/>
            <person name="Palm C.J."/>
            <person name="Federspiel N.A."/>
            <person name="Kaul S."/>
            <person name="White O."/>
            <person name="Alonso J."/>
            <person name="Altafi H."/>
            <person name="Araujo R."/>
            <person name="Bowman C.L."/>
            <person name="Brooks S.Y."/>
            <person name="Buehler E."/>
            <person name="Chan A."/>
            <person name="Chao Q."/>
            <person name="Chen H."/>
            <person name="Cheuk R.F."/>
            <person name="Chin C.W."/>
            <person name="Chung M.K."/>
            <person name="Conn L."/>
            <person name="Conway A.B."/>
            <person name="Conway A.R."/>
            <person name="Creasy T.H."/>
            <person name="Dewar K."/>
            <person name="Dunn P."/>
            <person name="Etgu P."/>
            <person name="Feldblyum T.V."/>
            <person name="Feng J.-D."/>
            <person name="Fong B."/>
            <person name="Fujii C.Y."/>
            <person name="Gill J.E."/>
            <person name="Goldsmith A.D."/>
            <person name="Haas B."/>
            <person name="Hansen N.F."/>
            <person name="Hughes B."/>
            <person name="Huizar L."/>
            <person name="Hunter J.L."/>
            <person name="Jenkins J."/>
            <person name="Johnson-Hopson C."/>
            <person name="Khan S."/>
            <person name="Khaykin E."/>
            <person name="Kim C.J."/>
            <person name="Koo H.L."/>
            <person name="Kremenetskaia I."/>
            <person name="Kurtz D.B."/>
            <person name="Kwan A."/>
            <person name="Lam B."/>
            <person name="Langin-Hooper S."/>
            <person name="Lee A."/>
            <person name="Lee J.M."/>
            <person name="Lenz C.A."/>
            <person name="Li J.H."/>
            <person name="Li Y.-P."/>
            <person name="Lin X."/>
            <person name="Liu S.X."/>
            <person name="Liu Z.A."/>
            <person name="Luros J.S."/>
            <person name="Maiti R."/>
            <person name="Marziali A."/>
            <person name="Militscher J."/>
            <person name="Miranda M."/>
            <person name="Nguyen M."/>
            <person name="Nierman W.C."/>
            <person name="Osborne B.I."/>
            <person name="Pai G."/>
            <person name="Peterson J."/>
            <person name="Pham P.K."/>
            <person name="Rizzo M."/>
            <person name="Rooney T."/>
            <person name="Rowley D."/>
            <person name="Sakano H."/>
            <person name="Salzberg S.L."/>
            <person name="Schwartz J.R."/>
            <person name="Shinn P."/>
            <person name="Southwick A.M."/>
            <person name="Sun H."/>
            <person name="Tallon L.J."/>
            <person name="Tambunga G."/>
            <person name="Toriumi M.J."/>
            <person name="Town C.D."/>
            <person name="Utterback T."/>
            <person name="Van Aken S."/>
            <person name="Vaysberg M."/>
            <person name="Vysotskaia V.S."/>
            <person name="Walker M."/>
            <person name="Wu D."/>
            <person name="Yu G."/>
            <person name="Fraser C.M."/>
            <person name="Venter J.C."/>
            <person name="Davis R.W."/>
        </authorList>
    </citation>
    <scope>NUCLEOTIDE SEQUENCE [LARGE SCALE GENOMIC DNA]</scope>
    <source>
        <strain>cv. Columbia</strain>
    </source>
</reference>
<reference key="2">
    <citation type="journal article" date="2017" name="Plant J.">
        <title>Araport11: a complete reannotation of the Arabidopsis thaliana reference genome.</title>
        <authorList>
            <person name="Cheng C.Y."/>
            <person name="Krishnakumar V."/>
            <person name="Chan A.P."/>
            <person name="Thibaud-Nissen F."/>
            <person name="Schobel S."/>
            <person name="Town C.D."/>
        </authorList>
    </citation>
    <scope>GENOME REANNOTATION</scope>
    <source>
        <strain>cv. Columbia</strain>
    </source>
</reference>
<reference key="3">
    <citation type="journal article" date="2002" name="Science">
        <title>Functional annotation of a full-length Arabidopsis cDNA collection.</title>
        <authorList>
            <person name="Seki M."/>
            <person name="Narusaka M."/>
            <person name="Kamiya A."/>
            <person name="Ishida J."/>
            <person name="Satou M."/>
            <person name="Sakurai T."/>
            <person name="Nakajima M."/>
            <person name="Enju A."/>
            <person name="Akiyama K."/>
            <person name="Oono Y."/>
            <person name="Muramatsu M."/>
            <person name="Hayashizaki Y."/>
            <person name="Kawai J."/>
            <person name="Carninci P."/>
            <person name="Itoh M."/>
            <person name="Ishii Y."/>
            <person name="Arakawa T."/>
            <person name="Shibata K."/>
            <person name="Shinagawa A."/>
            <person name="Shinozaki K."/>
        </authorList>
    </citation>
    <scope>NUCLEOTIDE SEQUENCE [LARGE SCALE MRNA]</scope>
    <source>
        <strain>cv. Columbia</strain>
    </source>
</reference>
<reference key="4">
    <citation type="journal article" date="2003" name="Science">
        <title>Empirical analysis of transcriptional activity in the Arabidopsis genome.</title>
        <authorList>
            <person name="Yamada K."/>
            <person name="Lim J."/>
            <person name="Dale J.M."/>
            <person name="Chen H."/>
            <person name="Shinn P."/>
            <person name="Palm C.J."/>
            <person name="Southwick A.M."/>
            <person name="Wu H.C."/>
            <person name="Kim C.J."/>
            <person name="Nguyen M."/>
            <person name="Pham P.K."/>
            <person name="Cheuk R.F."/>
            <person name="Karlin-Newmann G."/>
            <person name="Liu S.X."/>
            <person name="Lam B."/>
            <person name="Sakano H."/>
            <person name="Wu T."/>
            <person name="Yu G."/>
            <person name="Miranda M."/>
            <person name="Quach H.L."/>
            <person name="Tripp M."/>
            <person name="Chang C.H."/>
            <person name="Lee J.M."/>
            <person name="Toriumi M.J."/>
            <person name="Chan M.M."/>
            <person name="Tang C.C."/>
            <person name="Onodera C.S."/>
            <person name="Deng J.M."/>
            <person name="Akiyama K."/>
            <person name="Ansari Y."/>
            <person name="Arakawa T."/>
            <person name="Banh J."/>
            <person name="Banno F."/>
            <person name="Bowser L."/>
            <person name="Brooks S.Y."/>
            <person name="Carninci P."/>
            <person name="Chao Q."/>
            <person name="Choy N."/>
            <person name="Enju A."/>
            <person name="Goldsmith A.D."/>
            <person name="Gurjal M."/>
            <person name="Hansen N.F."/>
            <person name="Hayashizaki Y."/>
            <person name="Johnson-Hopson C."/>
            <person name="Hsuan V.W."/>
            <person name="Iida K."/>
            <person name="Karnes M."/>
            <person name="Khan S."/>
            <person name="Koesema E."/>
            <person name="Ishida J."/>
            <person name="Jiang P.X."/>
            <person name="Jones T."/>
            <person name="Kawai J."/>
            <person name="Kamiya A."/>
            <person name="Meyers C."/>
            <person name="Nakajima M."/>
            <person name="Narusaka M."/>
            <person name="Seki M."/>
            <person name="Sakurai T."/>
            <person name="Satou M."/>
            <person name="Tamse R."/>
            <person name="Vaysberg M."/>
            <person name="Wallender E.K."/>
            <person name="Wong C."/>
            <person name="Yamamura Y."/>
            <person name="Yuan S."/>
            <person name="Shinozaki K."/>
            <person name="Davis R.W."/>
            <person name="Theologis A."/>
            <person name="Ecker J.R."/>
        </authorList>
    </citation>
    <scope>NUCLEOTIDE SEQUENCE [LARGE SCALE MRNA]</scope>
    <source>
        <strain>cv. Columbia</strain>
    </source>
</reference>
<reference key="5">
    <citation type="journal article" date="2006" name="Proc. Natl. Acad. Sci. U.S.A.">
        <title>Functional identification of an Arabidopsis pectin biosynthetic homogalacturonan galacturonosyltransferase.</title>
        <authorList>
            <person name="Sterling J.D."/>
            <person name="Atmodjo M.A."/>
            <person name="Inwood S.E."/>
            <person name="Kumar Kolli V.S."/>
            <person name="Quigley H.F."/>
            <person name="Hahn M.G."/>
            <person name="Mohnen D."/>
        </authorList>
    </citation>
    <scope>GENE FAMILY</scope>
    <scope>NOMENCLATURE</scope>
</reference>
<dbReference type="EC" id="2.4.1.-"/>
<dbReference type="EMBL" id="AC022521">
    <property type="protein sequence ID" value="AAG10630.1"/>
    <property type="molecule type" value="Genomic_DNA"/>
</dbReference>
<dbReference type="EMBL" id="CP002684">
    <property type="protein sequence ID" value="AEE27462.1"/>
    <property type="molecule type" value="Genomic_DNA"/>
</dbReference>
<dbReference type="EMBL" id="CP002684">
    <property type="protein sequence ID" value="AEE27463.1"/>
    <property type="molecule type" value="Genomic_DNA"/>
</dbReference>
<dbReference type="EMBL" id="AK118584">
    <property type="protein sequence ID" value="BAC43184.1"/>
    <property type="molecule type" value="mRNA"/>
</dbReference>
<dbReference type="EMBL" id="BT002062">
    <property type="protein sequence ID" value="AAN72073.1"/>
    <property type="molecule type" value="mRNA"/>
</dbReference>
<dbReference type="EMBL" id="BT008848">
    <property type="protein sequence ID" value="AAP68287.1"/>
    <property type="molecule type" value="mRNA"/>
</dbReference>
<dbReference type="PIR" id="C86157">
    <property type="entry name" value="C86157"/>
</dbReference>
<dbReference type="RefSeq" id="NP_171772.1">
    <property type="nucleotide sequence ID" value="NM_100152.3"/>
</dbReference>
<dbReference type="RefSeq" id="NP_973744.1">
    <property type="nucleotide sequence ID" value="NM_202015.2"/>
</dbReference>
<dbReference type="SMR" id="Q9FWY9"/>
<dbReference type="FunCoup" id="Q9FWY9">
    <property type="interactions" value="755"/>
</dbReference>
<dbReference type="STRING" id="3702.Q9FWY9"/>
<dbReference type="CAZy" id="GT8">
    <property type="family name" value="Glycosyltransferase Family 8"/>
</dbReference>
<dbReference type="GlyCosmos" id="Q9FWY9">
    <property type="glycosylation" value="2 sites, No reported glycans"/>
</dbReference>
<dbReference type="GlyGen" id="Q9FWY9">
    <property type="glycosylation" value="2 sites"/>
</dbReference>
<dbReference type="PaxDb" id="3702-AT1G02720.1"/>
<dbReference type="EnsemblPlants" id="AT1G02720.1">
    <property type="protein sequence ID" value="AT1G02720.1"/>
    <property type="gene ID" value="AT1G02720"/>
</dbReference>
<dbReference type="EnsemblPlants" id="AT1G02720.2">
    <property type="protein sequence ID" value="AT1G02720.2"/>
    <property type="gene ID" value="AT1G02720"/>
</dbReference>
<dbReference type="GeneID" id="839475"/>
<dbReference type="Gramene" id="AT1G02720.1">
    <property type="protein sequence ID" value="AT1G02720.1"/>
    <property type="gene ID" value="AT1G02720"/>
</dbReference>
<dbReference type="Gramene" id="AT1G02720.2">
    <property type="protein sequence ID" value="AT1G02720.2"/>
    <property type="gene ID" value="AT1G02720"/>
</dbReference>
<dbReference type="KEGG" id="ath:AT1G02720"/>
<dbReference type="Araport" id="AT1G02720"/>
<dbReference type="TAIR" id="AT1G02720">
    <property type="gene designation" value="GATL5"/>
</dbReference>
<dbReference type="eggNOG" id="ENOG502QTN8">
    <property type="taxonomic scope" value="Eukaryota"/>
</dbReference>
<dbReference type="HOGENOM" id="CLU_034713_1_0_1"/>
<dbReference type="InParanoid" id="Q9FWY9"/>
<dbReference type="OMA" id="QKMERIY"/>
<dbReference type="PhylomeDB" id="Q9FWY9"/>
<dbReference type="UniPathway" id="UPA00845"/>
<dbReference type="PRO" id="PR:Q9FWY9"/>
<dbReference type="Proteomes" id="UP000006548">
    <property type="component" value="Chromosome 1"/>
</dbReference>
<dbReference type="ExpressionAtlas" id="Q9FWY9">
    <property type="expression patterns" value="baseline and differential"/>
</dbReference>
<dbReference type="GO" id="GO:0005783">
    <property type="term" value="C:endoplasmic reticulum"/>
    <property type="evidence" value="ECO:0000314"/>
    <property type="project" value="TAIR"/>
</dbReference>
<dbReference type="GO" id="GO:0005794">
    <property type="term" value="C:Golgi apparatus"/>
    <property type="evidence" value="ECO:0000314"/>
    <property type="project" value="TAIR"/>
</dbReference>
<dbReference type="GO" id="GO:0000139">
    <property type="term" value="C:Golgi membrane"/>
    <property type="evidence" value="ECO:0007669"/>
    <property type="project" value="UniProtKB-SubCell"/>
</dbReference>
<dbReference type="GO" id="GO:0047262">
    <property type="term" value="F:polygalacturonate 4-alpha-galacturonosyltransferase activity"/>
    <property type="evidence" value="ECO:0000250"/>
    <property type="project" value="TAIR"/>
</dbReference>
<dbReference type="GO" id="GO:0048354">
    <property type="term" value="P:mucilage biosynthetic process involved in seed coat development"/>
    <property type="evidence" value="ECO:0000315"/>
    <property type="project" value="TAIR"/>
</dbReference>
<dbReference type="GO" id="GO:0048363">
    <property type="term" value="P:mucilage pectin metabolic process"/>
    <property type="evidence" value="ECO:0000315"/>
    <property type="project" value="TAIR"/>
</dbReference>
<dbReference type="GO" id="GO:0045489">
    <property type="term" value="P:pectin biosynthetic process"/>
    <property type="evidence" value="ECO:0007669"/>
    <property type="project" value="UniProtKB-UniPathway"/>
</dbReference>
<dbReference type="GO" id="GO:0071668">
    <property type="term" value="P:plant-type cell wall assembly"/>
    <property type="evidence" value="ECO:0000315"/>
    <property type="project" value="TAIR"/>
</dbReference>
<dbReference type="FunFam" id="3.90.550.10:FF:000024">
    <property type="entry name" value="Hexosyltransferase"/>
    <property type="match status" value="1"/>
</dbReference>
<dbReference type="Gene3D" id="3.90.550.10">
    <property type="entry name" value="Spore Coat Polysaccharide Biosynthesis Protein SpsA, Chain A"/>
    <property type="match status" value="1"/>
</dbReference>
<dbReference type="InterPro" id="IPR002495">
    <property type="entry name" value="Glyco_trans_8"/>
</dbReference>
<dbReference type="InterPro" id="IPR050748">
    <property type="entry name" value="Glycosyltrans_8_dom-fam"/>
</dbReference>
<dbReference type="InterPro" id="IPR029044">
    <property type="entry name" value="Nucleotide-diphossugar_trans"/>
</dbReference>
<dbReference type="PANTHER" id="PTHR13778:SF71">
    <property type="entry name" value="GALACTURONOSYLTRANSFERASE-LIKE 5-RELATED"/>
    <property type="match status" value="1"/>
</dbReference>
<dbReference type="PANTHER" id="PTHR13778">
    <property type="entry name" value="GLYCOSYLTRANSFERASE 8 DOMAIN-CONTAINING PROTEIN"/>
    <property type="match status" value="1"/>
</dbReference>
<dbReference type="Pfam" id="PF01501">
    <property type="entry name" value="Glyco_transf_8"/>
    <property type="match status" value="1"/>
</dbReference>
<dbReference type="SUPFAM" id="SSF53448">
    <property type="entry name" value="Nucleotide-diphospho-sugar transferases"/>
    <property type="match status" value="1"/>
</dbReference>
<name>GATL5_ARATH</name>
<comment type="function">
    <text evidence="1">May be involved in pectin and/or xylans biosynthesis in cell walls.</text>
</comment>
<comment type="pathway">
    <text>Glycan metabolism; pectin biosynthesis.</text>
</comment>
<comment type="subcellular location">
    <subcellularLocation>
        <location evidence="1">Golgi apparatus membrane</location>
        <topology evidence="1">Single-pass type II membrane protein</topology>
    </subcellularLocation>
</comment>
<comment type="similarity">
    <text evidence="3">Belongs to the glycosyltransferase 8 family.</text>
</comment>
<proteinExistence type="evidence at transcript level"/>
<protein>
    <recommendedName>
        <fullName>Probable galacturonosyltransferase-like 5</fullName>
        <ecNumber>2.4.1.-</ecNumber>
    </recommendedName>
</protein>
<feature type="chain" id="PRO_0000392607" description="Probable galacturonosyltransferase-like 5">
    <location>
        <begin position="1"/>
        <end position="361"/>
    </location>
</feature>
<feature type="topological domain" description="Cytoplasmic" evidence="2">
    <location>
        <begin position="1"/>
        <end position="6"/>
    </location>
</feature>
<feature type="transmembrane region" description="Helical; Signal-anchor for type II membrane protein" evidence="2">
    <location>
        <begin position="7"/>
        <end position="27"/>
    </location>
</feature>
<feature type="topological domain" description="Lumenal" evidence="2">
    <location>
        <begin position="28"/>
        <end position="361"/>
    </location>
</feature>
<feature type="glycosylation site" description="N-linked (GlcNAc...) asparagine" evidence="2">
    <location>
        <position position="218"/>
    </location>
</feature>
<feature type="glycosylation site" description="N-linked (GlcNAc...) asparagine" evidence="2">
    <location>
        <position position="234"/>
    </location>
</feature>
<organism>
    <name type="scientific">Arabidopsis thaliana</name>
    <name type="common">Mouse-ear cress</name>
    <dbReference type="NCBI Taxonomy" id="3702"/>
    <lineage>
        <taxon>Eukaryota</taxon>
        <taxon>Viridiplantae</taxon>
        <taxon>Streptophyta</taxon>
        <taxon>Embryophyta</taxon>
        <taxon>Tracheophyta</taxon>
        <taxon>Spermatophyta</taxon>
        <taxon>Magnoliopsida</taxon>
        <taxon>eudicotyledons</taxon>
        <taxon>Gunneridae</taxon>
        <taxon>Pentapetalae</taxon>
        <taxon>rosids</taxon>
        <taxon>malvids</taxon>
        <taxon>Brassicales</taxon>
        <taxon>Brassicaceae</taxon>
        <taxon>Camelineae</taxon>
        <taxon>Arabidopsis</taxon>
    </lineage>
</organism>
<sequence>MHWITRFSAFFSAALAMILLSPSLQSFSPAAAIRSSHPYADEFKPQQNSDYSSFRESPMFRNAEQCRSSGEDSGVCNPNLVHVAITLDIDYLRGSIAAVNSILQHSMCPQSVFFHFLVSSESQNLESLIRSTFPKLTNLKIYYFAPETVQSLISSSVRQALEQPLNYARNYLADLLEPCVKRVIYLDSDLVVVDDIVKLWKTGLGQRTIGAPEYCHANFTKYFTGGFWSDKRFNGTFKGRNPCYFNTGVMVIDLKKWRQFRFTKRIEKWMEIQKIERIYELGSLPPFLLVFAGHVAPISHRWNQHGLGGDNVRGSCRDLHSGPVSLLHWSGSGKPWLRLDSKLPCPLDTLWAPYDLYKHSH</sequence>
<accession>Q9FWY9</accession>
<evidence type="ECO:0000250" key="1"/>
<evidence type="ECO:0000255" key="2"/>
<evidence type="ECO:0000305" key="3"/>
<gene>
    <name type="primary">GATL5</name>
    <name type="ordered locus">At1g02720</name>
    <name type="ORF">T14P4.1</name>
    <name type="ORF">T14P4.8</name>
</gene>
<keyword id="KW-0961">Cell wall biogenesis/degradation</keyword>
<keyword id="KW-0325">Glycoprotein</keyword>
<keyword id="KW-0328">Glycosyltransferase</keyword>
<keyword id="KW-0333">Golgi apparatus</keyword>
<keyword id="KW-0472">Membrane</keyword>
<keyword id="KW-1185">Reference proteome</keyword>
<keyword id="KW-0735">Signal-anchor</keyword>
<keyword id="KW-0808">Transferase</keyword>
<keyword id="KW-0812">Transmembrane</keyword>
<keyword id="KW-1133">Transmembrane helix</keyword>